<comment type="function">
    <text>May play a role in the correct development and proper functioning of the peripheral and central nervous system and be involved in cell adhesion and intercellular communication.</text>
</comment>
<comment type="subcellular location">
    <subcellularLocation>
        <location evidence="7">Membrane</location>
        <topology evidence="7">Single-pass type I membrane protein</topology>
    </subcellularLocation>
</comment>
<comment type="similarity">
    <text evidence="7">Belongs to the neurexin family.</text>
</comment>
<accession>Q8WYK1</accession>
<accession>Q4ZFW2</accession>
<accession>Q4ZG21</accession>
<accession>Q53R09</accession>
<accession>Q53RX1</accession>
<accession>Q53SG3</accession>
<accession>Q584P3</accession>
<accession>Q96MS7</accession>
<feature type="signal peptide" evidence="2">
    <location>
        <begin position="1"/>
        <end position="24"/>
    </location>
</feature>
<feature type="chain" id="PRO_0000317377" description="Contactin-associated protein-like 5">
    <location>
        <begin position="25"/>
        <end position="1306"/>
    </location>
</feature>
<feature type="topological domain" description="Extracellular" evidence="2">
    <location>
        <begin position="25"/>
        <end position="1237"/>
    </location>
</feature>
<feature type="transmembrane region" description="Helical" evidence="2">
    <location>
        <begin position="1238"/>
        <end position="1258"/>
    </location>
</feature>
<feature type="topological domain" description="Cytoplasmic" evidence="2">
    <location>
        <begin position="1259"/>
        <end position="1306"/>
    </location>
</feature>
<feature type="domain" description="F5/8 type C" evidence="4">
    <location>
        <begin position="30"/>
        <end position="174"/>
    </location>
</feature>
<feature type="domain" description="Laminin G-like 1" evidence="5">
    <location>
        <begin position="180"/>
        <end position="360"/>
    </location>
</feature>
<feature type="domain" description="Laminin G-like 2" evidence="5">
    <location>
        <begin position="367"/>
        <end position="544"/>
    </location>
</feature>
<feature type="domain" description="EGF-like 1" evidence="3">
    <location>
        <begin position="546"/>
        <end position="583"/>
    </location>
</feature>
<feature type="domain" description="Fibrinogen C-terminal" evidence="6">
    <location>
        <begin position="584"/>
        <end position="790"/>
    </location>
</feature>
<feature type="domain" description="Laminin G-like 3" evidence="5">
    <location>
        <begin position="791"/>
        <end position="956"/>
    </location>
</feature>
<feature type="domain" description="EGF-like 2" evidence="3">
    <location>
        <begin position="957"/>
        <end position="995"/>
    </location>
</feature>
<feature type="domain" description="Laminin G-like 4" evidence="5">
    <location>
        <begin position="1013"/>
        <end position="1199"/>
    </location>
</feature>
<feature type="glycosylation site" description="N-linked (GlcNAc...) asparagine" evidence="2">
    <location>
        <position position="282"/>
    </location>
</feature>
<feature type="glycosylation site" description="N-linked (GlcNAc...) asparagine" evidence="2">
    <location>
        <position position="355"/>
    </location>
</feature>
<feature type="glycosylation site" description="N-linked (GlcNAc...) asparagine" evidence="2">
    <location>
        <position position="496"/>
    </location>
</feature>
<feature type="glycosylation site" description="N-linked (GlcNAc...) asparagine" evidence="2">
    <location>
        <position position="571"/>
    </location>
</feature>
<feature type="glycosylation site" description="N-linked (GlcNAc...) asparagine" evidence="2">
    <location>
        <position position="622"/>
    </location>
</feature>
<feature type="disulfide bond" evidence="1">
    <location>
        <begin position="30"/>
        <end position="174"/>
    </location>
</feature>
<feature type="disulfide bond" evidence="1">
    <location>
        <begin position="329"/>
        <end position="360"/>
    </location>
</feature>
<feature type="disulfide bond" evidence="1">
    <location>
        <begin position="512"/>
        <end position="544"/>
    </location>
</feature>
<feature type="disulfide bond" evidence="1">
    <location>
        <begin position="550"/>
        <end position="561"/>
    </location>
</feature>
<feature type="disulfide bond" evidence="1">
    <location>
        <begin position="555"/>
        <end position="570"/>
    </location>
</feature>
<feature type="disulfide bond" evidence="1">
    <location>
        <begin position="572"/>
        <end position="582"/>
    </location>
</feature>
<feature type="disulfide bond" evidence="1">
    <location>
        <begin position="929"/>
        <end position="956"/>
    </location>
</feature>
<feature type="disulfide bond" evidence="1">
    <location>
        <begin position="960"/>
        <end position="973"/>
    </location>
</feature>
<feature type="disulfide bond" evidence="1">
    <location>
        <begin position="967"/>
        <end position="982"/>
    </location>
</feature>
<feature type="disulfide bond" evidence="1">
    <location>
        <begin position="984"/>
        <end position="994"/>
    </location>
</feature>
<feature type="disulfide bond" evidence="1">
    <location>
        <begin position="1164"/>
        <end position="1199"/>
    </location>
</feature>
<feature type="sequence variant" id="VAR_038518" description="In dbSNP:rs17727261.">
    <original>S</original>
    <variation>L</variation>
    <location>
        <position position="452"/>
    </location>
</feature>
<feature type="sequence variant" id="VAR_038519" description="In dbSNP:rs34165507.">
    <original>T</original>
    <variation>M</variation>
    <location>
        <position position="1195"/>
    </location>
</feature>
<feature type="sequence conflict" description="In Ref. 4; BAB71205." evidence="7" ref="4">
    <original>T</original>
    <variation>TV</variation>
    <location>
        <position position="353"/>
    </location>
</feature>
<feature type="sequence conflict" description="In Ref. 4; BAB71205." evidence="7" ref="4">
    <original>L</original>
    <variation>P</variation>
    <location>
        <position position="449"/>
    </location>
</feature>
<feature type="sequence conflict" description="In Ref. 4; BAB71205." evidence="7" ref="4">
    <original>PGHCSS</original>
    <variation>SIKKLK</variation>
    <location>
        <begin position="957"/>
        <end position="962"/>
    </location>
</feature>
<dbReference type="EMBL" id="AB077881">
    <property type="protein sequence ID" value="BAB83897.1"/>
    <property type="molecule type" value="mRNA"/>
</dbReference>
<dbReference type="EMBL" id="AC019105">
    <property type="protein sequence ID" value="AAY14716.1"/>
    <property type="molecule type" value="Genomic_DNA"/>
</dbReference>
<dbReference type="EMBL" id="AC019159">
    <property type="protein sequence ID" value="AAX88894.1"/>
    <property type="molecule type" value="Genomic_DNA"/>
</dbReference>
<dbReference type="EMBL" id="AC074362">
    <property type="protein sequence ID" value="AAX81997.1"/>
    <property type="molecule type" value="Genomic_DNA"/>
</dbReference>
<dbReference type="EMBL" id="AC079154">
    <property type="protein sequence ID" value="AAY15042.1"/>
    <property type="molecule type" value="Genomic_DNA"/>
</dbReference>
<dbReference type="EMBL" id="AC097715">
    <property type="protein sequence ID" value="AAY24250.1"/>
    <property type="molecule type" value="Genomic_DNA"/>
</dbReference>
<dbReference type="EMBL" id="AC104648">
    <property type="protein sequence ID" value="AAX88904.1"/>
    <property type="molecule type" value="Genomic_DNA"/>
</dbReference>
<dbReference type="EMBL" id="CH471103">
    <property type="protein sequence ID" value="EAW95266.1"/>
    <property type="molecule type" value="Genomic_DNA"/>
</dbReference>
<dbReference type="EMBL" id="AK056528">
    <property type="protein sequence ID" value="BAB71205.1"/>
    <property type="molecule type" value="mRNA"/>
</dbReference>
<dbReference type="CCDS" id="CCDS46401.1"/>
<dbReference type="RefSeq" id="NP_570129.1">
    <property type="nucleotide sequence ID" value="NM_130773.4"/>
</dbReference>
<dbReference type="SMR" id="Q8WYK1"/>
<dbReference type="BioGRID" id="126204">
    <property type="interactions" value="2"/>
</dbReference>
<dbReference type="FunCoup" id="Q8WYK1">
    <property type="interactions" value="128"/>
</dbReference>
<dbReference type="IntAct" id="Q8WYK1">
    <property type="interactions" value="4"/>
</dbReference>
<dbReference type="STRING" id="9606.ENSP00000399013"/>
<dbReference type="GlyCosmos" id="Q8WYK1">
    <property type="glycosylation" value="5 sites, No reported glycans"/>
</dbReference>
<dbReference type="GlyGen" id="Q8WYK1">
    <property type="glycosylation" value="5 sites"/>
</dbReference>
<dbReference type="iPTMnet" id="Q8WYK1"/>
<dbReference type="PhosphoSitePlus" id="Q8WYK1"/>
<dbReference type="BioMuta" id="CNTNAP5"/>
<dbReference type="DMDM" id="74716461"/>
<dbReference type="jPOST" id="Q8WYK1"/>
<dbReference type="MassIVE" id="Q8WYK1"/>
<dbReference type="PaxDb" id="9606-ENSP00000399013"/>
<dbReference type="PeptideAtlas" id="Q8WYK1"/>
<dbReference type="ProteomicsDB" id="75163"/>
<dbReference type="Antibodypedia" id="33412">
    <property type="antibodies" value="22 antibodies from 7 providers"/>
</dbReference>
<dbReference type="DNASU" id="129684"/>
<dbReference type="Ensembl" id="ENST00000431078.1">
    <property type="protein sequence ID" value="ENSP00000399013.1"/>
    <property type="gene ID" value="ENSG00000155052.15"/>
</dbReference>
<dbReference type="GeneID" id="129684"/>
<dbReference type="KEGG" id="hsa:129684"/>
<dbReference type="UCSC" id="uc002tno.5">
    <property type="organism name" value="human"/>
</dbReference>
<dbReference type="AGR" id="HGNC:18748"/>
<dbReference type="CTD" id="129684"/>
<dbReference type="DisGeNET" id="129684"/>
<dbReference type="GeneCards" id="CNTNAP5"/>
<dbReference type="HGNC" id="HGNC:18748">
    <property type="gene designation" value="CNTNAP5"/>
</dbReference>
<dbReference type="HPA" id="ENSG00000155052">
    <property type="expression patterns" value="Group enriched (brain, retina)"/>
</dbReference>
<dbReference type="MalaCards" id="CNTNAP5"/>
<dbReference type="MIM" id="610519">
    <property type="type" value="gene"/>
</dbReference>
<dbReference type="neXtProt" id="NX_Q8WYK1"/>
<dbReference type="OpenTargets" id="ENSG00000155052"/>
<dbReference type="PharmGKB" id="PA134898715"/>
<dbReference type="VEuPathDB" id="HostDB:ENSG00000155052"/>
<dbReference type="eggNOG" id="KOG3516">
    <property type="taxonomic scope" value="Eukaryota"/>
</dbReference>
<dbReference type="GeneTree" id="ENSGT00940000160532"/>
<dbReference type="HOGENOM" id="CLU_003504_1_0_1"/>
<dbReference type="InParanoid" id="Q8WYK1"/>
<dbReference type="OMA" id="GWNCGRE"/>
<dbReference type="OrthoDB" id="26719at2759"/>
<dbReference type="PAN-GO" id="Q8WYK1">
    <property type="GO annotations" value="0 GO annotations based on evolutionary models"/>
</dbReference>
<dbReference type="PhylomeDB" id="Q8WYK1"/>
<dbReference type="TreeFam" id="TF321823"/>
<dbReference type="PathwayCommons" id="Q8WYK1"/>
<dbReference type="SignaLink" id="Q8WYK1"/>
<dbReference type="BioGRID-ORCS" id="129684">
    <property type="hits" value="8 hits in 1137 CRISPR screens"/>
</dbReference>
<dbReference type="ChiTaRS" id="CNTNAP5">
    <property type="organism name" value="human"/>
</dbReference>
<dbReference type="GenomeRNAi" id="129684"/>
<dbReference type="Pharos" id="Q8WYK1">
    <property type="development level" value="Tbio"/>
</dbReference>
<dbReference type="PRO" id="PR:Q8WYK1"/>
<dbReference type="Proteomes" id="UP000005640">
    <property type="component" value="Chromosome 2"/>
</dbReference>
<dbReference type="RNAct" id="Q8WYK1">
    <property type="molecule type" value="protein"/>
</dbReference>
<dbReference type="Bgee" id="ENSG00000155052">
    <property type="expression patterns" value="Expressed in male germ line stem cell (sensu Vertebrata) in testis and 69 other cell types or tissues"/>
</dbReference>
<dbReference type="GO" id="GO:0016020">
    <property type="term" value="C:membrane"/>
    <property type="evidence" value="ECO:0007669"/>
    <property type="project" value="UniProtKB-SubCell"/>
</dbReference>
<dbReference type="GO" id="GO:0007155">
    <property type="term" value="P:cell adhesion"/>
    <property type="evidence" value="ECO:0007669"/>
    <property type="project" value="UniProtKB-KW"/>
</dbReference>
<dbReference type="CDD" id="cd00054">
    <property type="entry name" value="EGF_CA"/>
    <property type="match status" value="2"/>
</dbReference>
<dbReference type="CDD" id="cd00057">
    <property type="entry name" value="FA58C"/>
    <property type="match status" value="1"/>
</dbReference>
<dbReference type="CDD" id="cd00110">
    <property type="entry name" value="LamG"/>
    <property type="match status" value="4"/>
</dbReference>
<dbReference type="FunFam" id="2.60.120.1000:FF:000005">
    <property type="entry name" value="Contactin associated protein-like 2"/>
    <property type="match status" value="1"/>
</dbReference>
<dbReference type="FunFam" id="2.60.120.260:FF:000016">
    <property type="entry name" value="Contactin-associated protein-like 4 isoform 1"/>
    <property type="match status" value="1"/>
</dbReference>
<dbReference type="FunFam" id="2.60.120.200:FF:000026">
    <property type="entry name" value="contactin-associated protein-like 4 isoform X1"/>
    <property type="match status" value="1"/>
</dbReference>
<dbReference type="Gene3D" id="2.60.120.1000">
    <property type="match status" value="1"/>
</dbReference>
<dbReference type="Gene3D" id="2.60.120.200">
    <property type="match status" value="4"/>
</dbReference>
<dbReference type="Gene3D" id="2.60.120.260">
    <property type="entry name" value="Galactose-binding domain-like"/>
    <property type="match status" value="1"/>
</dbReference>
<dbReference type="Gene3D" id="2.10.25.10">
    <property type="entry name" value="Laminin"/>
    <property type="match status" value="1"/>
</dbReference>
<dbReference type="InterPro" id="IPR013320">
    <property type="entry name" value="ConA-like_dom_sf"/>
</dbReference>
<dbReference type="InterPro" id="IPR000742">
    <property type="entry name" value="EGF-like_dom"/>
</dbReference>
<dbReference type="InterPro" id="IPR000421">
    <property type="entry name" value="FA58C"/>
</dbReference>
<dbReference type="InterPro" id="IPR036056">
    <property type="entry name" value="Fibrinogen-like_C"/>
</dbReference>
<dbReference type="InterPro" id="IPR002181">
    <property type="entry name" value="Fibrinogen_a/b/g_C_dom"/>
</dbReference>
<dbReference type="InterPro" id="IPR008979">
    <property type="entry name" value="Galactose-bd-like_sf"/>
</dbReference>
<dbReference type="InterPro" id="IPR001791">
    <property type="entry name" value="Laminin_G"/>
</dbReference>
<dbReference type="InterPro" id="IPR050372">
    <property type="entry name" value="Neurexin-related_CASP"/>
</dbReference>
<dbReference type="PANTHER" id="PTHR15036:SF46">
    <property type="entry name" value="CONTACTIN-ASSOCIATED PROTEIN-LIKE 5"/>
    <property type="match status" value="1"/>
</dbReference>
<dbReference type="PANTHER" id="PTHR15036">
    <property type="entry name" value="PIKACHURIN-LIKE PROTEIN"/>
    <property type="match status" value="1"/>
</dbReference>
<dbReference type="Pfam" id="PF00754">
    <property type="entry name" value="F5_F8_type_C"/>
    <property type="match status" value="1"/>
</dbReference>
<dbReference type="Pfam" id="PF02210">
    <property type="entry name" value="Laminin_G_2"/>
    <property type="match status" value="4"/>
</dbReference>
<dbReference type="SMART" id="SM00181">
    <property type="entry name" value="EGF"/>
    <property type="match status" value="2"/>
</dbReference>
<dbReference type="SMART" id="SM00231">
    <property type="entry name" value="FA58C"/>
    <property type="match status" value="1"/>
</dbReference>
<dbReference type="SMART" id="SM00282">
    <property type="entry name" value="LamG"/>
    <property type="match status" value="4"/>
</dbReference>
<dbReference type="SUPFAM" id="SSF49899">
    <property type="entry name" value="Concanavalin A-like lectins/glucanases"/>
    <property type="match status" value="4"/>
</dbReference>
<dbReference type="SUPFAM" id="SSF57196">
    <property type="entry name" value="EGF/Laminin"/>
    <property type="match status" value="1"/>
</dbReference>
<dbReference type="SUPFAM" id="SSF56496">
    <property type="entry name" value="Fibrinogen C-terminal domain-like"/>
    <property type="match status" value="1"/>
</dbReference>
<dbReference type="SUPFAM" id="SSF49785">
    <property type="entry name" value="Galactose-binding domain-like"/>
    <property type="match status" value="1"/>
</dbReference>
<dbReference type="PROSITE" id="PS50026">
    <property type="entry name" value="EGF_3"/>
    <property type="match status" value="2"/>
</dbReference>
<dbReference type="PROSITE" id="PS01286">
    <property type="entry name" value="FA58C_2"/>
    <property type="match status" value="1"/>
</dbReference>
<dbReference type="PROSITE" id="PS50022">
    <property type="entry name" value="FA58C_3"/>
    <property type="match status" value="1"/>
</dbReference>
<dbReference type="PROSITE" id="PS51406">
    <property type="entry name" value="FIBRINOGEN_C_2"/>
    <property type="match status" value="1"/>
</dbReference>
<dbReference type="PROSITE" id="PS50025">
    <property type="entry name" value="LAM_G_DOMAIN"/>
    <property type="match status" value="4"/>
</dbReference>
<evidence type="ECO:0000250" key="1"/>
<evidence type="ECO:0000255" key="2"/>
<evidence type="ECO:0000255" key="3">
    <source>
        <dbReference type="PROSITE-ProRule" id="PRU00076"/>
    </source>
</evidence>
<evidence type="ECO:0000255" key="4">
    <source>
        <dbReference type="PROSITE-ProRule" id="PRU00081"/>
    </source>
</evidence>
<evidence type="ECO:0000255" key="5">
    <source>
        <dbReference type="PROSITE-ProRule" id="PRU00122"/>
    </source>
</evidence>
<evidence type="ECO:0000255" key="6">
    <source>
        <dbReference type="PROSITE-ProRule" id="PRU00739"/>
    </source>
</evidence>
<evidence type="ECO:0000305" key="7"/>
<proteinExistence type="evidence at protein level"/>
<gene>
    <name type="primary">CNTNAP5</name>
    <name type="synonym">CASPR5</name>
</gene>
<reference key="1">
    <citation type="submission" date="2002-01" db="EMBL/GenBank/DDBJ databases">
        <title>In vitro and in vivo studies on the involvement of neural cell adhesion molecules and chondroitin sulfate proteoglycans in defining discrete axonal pathways of the rat cerebral cortex.</title>
        <authorList>
            <person name="Takeuchi K."/>
            <person name="Watanabe N."/>
            <person name="Kawano T."/>
            <person name="Kawamura K."/>
        </authorList>
    </citation>
    <scope>NUCLEOTIDE SEQUENCE [MRNA]</scope>
    <source>
        <tissue>Brain</tissue>
    </source>
</reference>
<reference key="2">
    <citation type="journal article" date="2005" name="Nature">
        <title>Generation and annotation of the DNA sequences of human chromosomes 2 and 4.</title>
        <authorList>
            <person name="Hillier L.W."/>
            <person name="Graves T.A."/>
            <person name="Fulton R.S."/>
            <person name="Fulton L.A."/>
            <person name="Pepin K.H."/>
            <person name="Minx P."/>
            <person name="Wagner-McPherson C."/>
            <person name="Layman D."/>
            <person name="Wylie K."/>
            <person name="Sekhon M."/>
            <person name="Becker M.C."/>
            <person name="Fewell G.A."/>
            <person name="Delehaunty K.D."/>
            <person name="Miner T.L."/>
            <person name="Nash W.E."/>
            <person name="Kremitzki C."/>
            <person name="Oddy L."/>
            <person name="Du H."/>
            <person name="Sun H."/>
            <person name="Bradshaw-Cordum H."/>
            <person name="Ali J."/>
            <person name="Carter J."/>
            <person name="Cordes M."/>
            <person name="Harris A."/>
            <person name="Isak A."/>
            <person name="van Brunt A."/>
            <person name="Nguyen C."/>
            <person name="Du F."/>
            <person name="Courtney L."/>
            <person name="Kalicki J."/>
            <person name="Ozersky P."/>
            <person name="Abbott S."/>
            <person name="Armstrong J."/>
            <person name="Belter E.A."/>
            <person name="Caruso L."/>
            <person name="Cedroni M."/>
            <person name="Cotton M."/>
            <person name="Davidson T."/>
            <person name="Desai A."/>
            <person name="Elliott G."/>
            <person name="Erb T."/>
            <person name="Fronick C."/>
            <person name="Gaige T."/>
            <person name="Haakenson W."/>
            <person name="Haglund K."/>
            <person name="Holmes A."/>
            <person name="Harkins R."/>
            <person name="Kim K."/>
            <person name="Kruchowski S.S."/>
            <person name="Strong C.M."/>
            <person name="Grewal N."/>
            <person name="Goyea E."/>
            <person name="Hou S."/>
            <person name="Levy A."/>
            <person name="Martinka S."/>
            <person name="Mead K."/>
            <person name="McLellan M.D."/>
            <person name="Meyer R."/>
            <person name="Randall-Maher J."/>
            <person name="Tomlinson C."/>
            <person name="Dauphin-Kohlberg S."/>
            <person name="Kozlowicz-Reilly A."/>
            <person name="Shah N."/>
            <person name="Swearengen-Shahid S."/>
            <person name="Snider J."/>
            <person name="Strong J.T."/>
            <person name="Thompson J."/>
            <person name="Yoakum M."/>
            <person name="Leonard S."/>
            <person name="Pearman C."/>
            <person name="Trani L."/>
            <person name="Radionenko M."/>
            <person name="Waligorski J.E."/>
            <person name="Wang C."/>
            <person name="Rock S.M."/>
            <person name="Tin-Wollam A.-M."/>
            <person name="Maupin R."/>
            <person name="Latreille P."/>
            <person name="Wendl M.C."/>
            <person name="Yang S.-P."/>
            <person name="Pohl C."/>
            <person name="Wallis J.W."/>
            <person name="Spieth J."/>
            <person name="Bieri T.A."/>
            <person name="Berkowicz N."/>
            <person name="Nelson J.O."/>
            <person name="Osborne J."/>
            <person name="Ding L."/>
            <person name="Meyer R."/>
            <person name="Sabo A."/>
            <person name="Shotland Y."/>
            <person name="Sinha P."/>
            <person name="Wohldmann P.E."/>
            <person name="Cook L.L."/>
            <person name="Hickenbotham M.T."/>
            <person name="Eldred J."/>
            <person name="Williams D."/>
            <person name="Jones T.A."/>
            <person name="She X."/>
            <person name="Ciccarelli F.D."/>
            <person name="Izaurralde E."/>
            <person name="Taylor J."/>
            <person name="Schmutz J."/>
            <person name="Myers R.M."/>
            <person name="Cox D.R."/>
            <person name="Huang X."/>
            <person name="McPherson J.D."/>
            <person name="Mardis E.R."/>
            <person name="Clifton S.W."/>
            <person name="Warren W.C."/>
            <person name="Chinwalla A.T."/>
            <person name="Eddy S.R."/>
            <person name="Marra M.A."/>
            <person name="Ovcharenko I."/>
            <person name="Furey T.S."/>
            <person name="Miller W."/>
            <person name="Eichler E.E."/>
            <person name="Bork P."/>
            <person name="Suyama M."/>
            <person name="Torrents D."/>
            <person name="Waterston R.H."/>
            <person name="Wilson R.K."/>
        </authorList>
    </citation>
    <scope>NUCLEOTIDE SEQUENCE [LARGE SCALE GENOMIC DNA]</scope>
</reference>
<reference key="3">
    <citation type="submission" date="2005-07" db="EMBL/GenBank/DDBJ databases">
        <authorList>
            <person name="Mural R.J."/>
            <person name="Istrail S."/>
            <person name="Sutton G.G."/>
            <person name="Florea L."/>
            <person name="Halpern A.L."/>
            <person name="Mobarry C.M."/>
            <person name="Lippert R."/>
            <person name="Walenz B."/>
            <person name="Shatkay H."/>
            <person name="Dew I."/>
            <person name="Miller J.R."/>
            <person name="Flanigan M.J."/>
            <person name="Edwards N.J."/>
            <person name="Bolanos R."/>
            <person name="Fasulo D."/>
            <person name="Halldorsson B.V."/>
            <person name="Hannenhalli S."/>
            <person name="Turner R."/>
            <person name="Yooseph S."/>
            <person name="Lu F."/>
            <person name="Nusskern D.R."/>
            <person name="Shue B.C."/>
            <person name="Zheng X.H."/>
            <person name="Zhong F."/>
            <person name="Delcher A.L."/>
            <person name="Huson D.H."/>
            <person name="Kravitz S.A."/>
            <person name="Mouchard L."/>
            <person name="Reinert K."/>
            <person name="Remington K.A."/>
            <person name="Clark A.G."/>
            <person name="Waterman M.S."/>
            <person name="Eichler E.E."/>
            <person name="Adams M.D."/>
            <person name="Hunkapiller M.W."/>
            <person name="Myers E.W."/>
            <person name="Venter J.C."/>
        </authorList>
    </citation>
    <scope>NUCLEOTIDE SEQUENCE [LARGE SCALE GENOMIC DNA]</scope>
</reference>
<reference key="4">
    <citation type="journal article" date="2004" name="Nat. Genet.">
        <title>Complete sequencing and characterization of 21,243 full-length human cDNAs.</title>
        <authorList>
            <person name="Ota T."/>
            <person name="Suzuki Y."/>
            <person name="Nishikawa T."/>
            <person name="Otsuki T."/>
            <person name="Sugiyama T."/>
            <person name="Irie R."/>
            <person name="Wakamatsu A."/>
            <person name="Hayashi K."/>
            <person name="Sato H."/>
            <person name="Nagai K."/>
            <person name="Kimura K."/>
            <person name="Makita H."/>
            <person name="Sekine M."/>
            <person name="Obayashi M."/>
            <person name="Nishi T."/>
            <person name="Shibahara T."/>
            <person name="Tanaka T."/>
            <person name="Ishii S."/>
            <person name="Yamamoto J."/>
            <person name="Saito K."/>
            <person name="Kawai Y."/>
            <person name="Isono Y."/>
            <person name="Nakamura Y."/>
            <person name="Nagahari K."/>
            <person name="Murakami K."/>
            <person name="Yasuda T."/>
            <person name="Iwayanagi T."/>
            <person name="Wagatsuma M."/>
            <person name="Shiratori A."/>
            <person name="Sudo H."/>
            <person name="Hosoiri T."/>
            <person name="Kaku Y."/>
            <person name="Kodaira H."/>
            <person name="Kondo H."/>
            <person name="Sugawara M."/>
            <person name="Takahashi M."/>
            <person name="Kanda K."/>
            <person name="Yokoi T."/>
            <person name="Furuya T."/>
            <person name="Kikkawa E."/>
            <person name="Omura Y."/>
            <person name="Abe K."/>
            <person name="Kamihara K."/>
            <person name="Katsuta N."/>
            <person name="Sato K."/>
            <person name="Tanikawa M."/>
            <person name="Yamazaki M."/>
            <person name="Ninomiya K."/>
            <person name="Ishibashi T."/>
            <person name="Yamashita H."/>
            <person name="Murakawa K."/>
            <person name="Fujimori K."/>
            <person name="Tanai H."/>
            <person name="Kimata M."/>
            <person name="Watanabe M."/>
            <person name="Hiraoka S."/>
            <person name="Chiba Y."/>
            <person name="Ishida S."/>
            <person name="Ono Y."/>
            <person name="Takiguchi S."/>
            <person name="Watanabe S."/>
            <person name="Yosida M."/>
            <person name="Hotuta T."/>
            <person name="Kusano J."/>
            <person name="Kanehori K."/>
            <person name="Takahashi-Fujii A."/>
            <person name="Hara H."/>
            <person name="Tanase T.-O."/>
            <person name="Nomura Y."/>
            <person name="Togiya S."/>
            <person name="Komai F."/>
            <person name="Hara R."/>
            <person name="Takeuchi K."/>
            <person name="Arita M."/>
            <person name="Imose N."/>
            <person name="Musashino K."/>
            <person name="Yuuki H."/>
            <person name="Oshima A."/>
            <person name="Sasaki N."/>
            <person name="Aotsuka S."/>
            <person name="Yoshikawa Y."/>
            <person name="Matsunawa H."/>
            <person name="Ichihara T."/>
            <person name="Shiohata N."/>
            <person name="Sano S."/>
            <person name="Moriya S."/>
            <person name="Momiyama H."/>
            <person name="Satoh N."/>
            <person name="Takami S."/>
            <person name="Terashima Y."/>
            <person name="Suzuki O."/>
            <person name="Nakagawa S."/>
            <person name="Senoh A."/>
            <person name="Mizoguchi H."/>
            <person name="Goto Y."/>
            <person name="Shimizu F."/>
            <person name="Wakebe H."/>
            <person name="Hishigaki H."/>
            <person name="Watanabe T."/>
            <person name="Sugiyama A."/>
            <person name="Takemoto M."/>
            <person name="Kawakami B."/>
            <person name="Yamazaki M."/>
            <person name="Watanabe K."/>
            <person name="Kumagai A."/>
            <person name="Itakura S."/>
            <person name="Fukuzumi Y."/>
            <person name="Fujimori Y."/>
            <person name="Komiyama M."/>
            <person name="Tashiro H."/>
            <person name="Tanigami A."/>
            <person name="Fujiwara T."/>
            <person name="Ono T."/>
            <person name="Yamada K."/>
            <person name="Fujii Y."/>
            <person name="Ozaki K."/>
            <person name="Hirao M."/>
            <person name="Ohmori Y."/>
            <person name="Kawabata A."/>
            <person name="Hikiji T."/>
            <person name="Kobatake N."/>
            <person name="Inagaki H."/>
            <person name="Ikema Y."/>
            <person name="Okamoto S."/>
            <person name="Okitani R."/>
            <person name="Kawakami T."/>
            <person name="Noguchi S."/>
            <person name="Itoh T."/>
            <person name="Shigeta K."/>
            <person name="Senba T."/>
            <person name="Matsumura K."/>
            <person name="Nakajima Y."/>
            <person name="Mizuno T."/>
            <person name="Morinaga M."/>
            <person name="Sasaki M."/>
            <person name="Togashi T."/>
            <person name="Oyama M."/>
            <person name="Hata H."/>
            <person name="Watanabe M."/>
            <person name="Komatsu T."/>
            <person name="Mizushima-Sugano J."/>
            <person name="Satoh T."/>
            <person name="Shirai Y."/>
            <person name="Takahashi Y."/>
            <person name="Nakagawa K."/>
            <person name="Okumura K."/>
            <person name="Nagase T."/>
            <person name="Nomura N."/>
            <person name="Kikuchi H."/>
            <person name="Masuho Y."/>
            <person name="Yamashita R."/>
            <person name="Nakai K."/>
            <person name="Yada T."/>
            <person name="Nakamura Y."/>
            <person name="Ohara O."/>
            <person name="Isogai T."/>
            <person name="Sugano S."/>
        </authorList>
    </citation>
    <scope>NUCLEOTIDE SEQUENCE [LARGE SCALE MRNA] OF 1-962</scope>
</reference>
<name>CNTP5_HUMAN</name>
<sequence>MDSLPRLTSVLTLLFSGLWHLGLTATNYNCDDPLASLLSPMAFSSSSDLTGTHSPAQLNWRVGTGGWSPADSNAQQWLQMDLGNRVEITAVATQGRYGSSDWVTSYSLMFSDTGRNWKQYKQEDSIWTFAGNMNADSVVHHKLLHSVRARFVRFVPLEWNPSGKIGMRVEVYGCSYKSDVADFDGRSSLLYRFNQKLMSTLKDVISLKFKSMQGDGVLFHGEGQRGDHITLELQKGRLALHLNLGDSKARLSSSLPSATLGSLLDDQHWHSVLIERVGKQVNFTVDKHTQHFRTKGETDALDIDYELSFGGIPVPGKPGTFLKKNFHGCIENLYYNGVNIIDLAKRRKHQIYTGNVTFSCSEPQIVPITFVNSSGSYLLLPGTPQIDGLSVSFQFRTWNKDGLLLSTELSEGSGTLLLSLEGGILRLVIQKMTERVAEILTGSNLNDGLWHSVSINARRNRITLTLDDEAAPPAPDSTWVQIYSGNSYYFGGCPDNLTDSQCLNPIKAFQGCMRLIFIDNQPKDLISVQQGSLGNFSDLHIDLCSIKDRCLPNYCEHGGSCSQSWTTFYCNCSDTSYTGATCHNSIYEQSCEVYRHQGNTAGFFYIDSDGSGPLGPLQVYCNITEDKIWTSVQHNNTELTRVRGANPEKPYAMALDYGGSMEQLEAVIDGSEHCEQEVAYHCRRSRLLNTPDGTPFTWWIGRSNERHPYWGGSPPGVQQCECGLDESCLDIQHFCNCDADKDEWTNDTGFLSFKDHLPVTQIVITDTDRSNSEAAWRIGPLRCYGDRRFWNAVSFYTEASYLHFPTFHAEFSADISFFFKTTALSGVFLENLGIKDFIRLEISSPSEITFAIDVGNGPVELVVQSPSLLNDNQWHYVRAERNLKETSLQVDNLPRSTRETSEEGHFRLQLNSQLFVGGTSSRQKGFLGCIRSLHLNGQKMDLEERAKVTSGVRPGCPGHCSSYGSICHNGGKCVEKHNGYLCDCTNSPYEGPFCKKEVSAVFEAGTSVTYMFQEPYPVTKNISLSSSAIYTDSAPSKENIALSFVTTQAPSLLLFINSSSQDFVVVLLCKNGSLQVRYHLNKEETHVFTIDADNFANRRMHHLKINREGRELTIQMDQQLRLSYNFSPEVEFRVIRSLTLGKVTENLGLDSEVAKANAMGFAGCMSSVQYNHIAPLKAALRHATVAPVTVHGTLTESSCGFMVDSDVNAVTTVHSSSDPFGKTDEREPLTNAVRSDSAVIGGVIAVVIFIIFCIIGIMTRFLYQHKQSHRTSQMKEKEYPENLDSSFRNEIDLQNTVSECKREYFI</sequence>
<organism>
    <name type="scientific">Homo sapiens</name>
    <name type="common">Human</name>
    <dbReference type="NCBI Taxonomy" id="9606"/>
    <lineage>
        <taxon>Eukaryota</taxon>
        <taxon>Metazoa</taxon>
        <taxon>Chordata</taxon>
        <taxon>Craniata</taxon>
        <taxon>Vertebrata</taxon>
        <taxon>Euteleostomi</taxon>
        <taxon>Mammalia</taxon>
        <taxon>Eutheria</taxon>
        <taxon>Euarchontoglires</taxon>
        <taxon>Primates</taxon>
        <taxon>Haplorrhini</taxon>
        <taxon>Catarrhini</taxon>
        <taxon>Hominidae</taxon>
        <taxon>Homo</taxon>
    </lineage>
</organism>
<keyword id="KW-0130">Cell adhesion</keyword>
<keyword id="KW-1015">Disulfide bond</keyword>
<keyword id="KW-0245">EGF-like domain</keyword>
<keyword id="KW-0325">Glycoprotein</keyword>
<keyword id="KW-0472">Membrane</keyword>
<keyword id="KW-1267">Proteomics identification</keyword>
<keyword id="KW-1185">Reference proteome</keyword>
<keyword id="KW-0677">Repeat</keyword>
<keyword id="KW-0732">Signal</keyword>
<keyword id="KW-0812">Transmembrane</keyword>
<keyword id="KW-1133">Transmembrane helix</keyword>
<protein>
    <recommendedName>
        <fullName>Contactin-associated protein-like 5</fullName>
    </recommendedName>
    <alternativeName>
        <fullName>Cell recognition molecule Caspr5</fullName>
    </alternativeName>
</protein>